<evidence type="ECO:0000250" key="1"/>
<evidence type="ECO:0000250" key="2">
    <source>
        <dbReference type="UniProtKB" id="Q95V55"/>
    </source>
</evidence>
<evidence type="ECO:0000255" key="3">
    <source>
        <dbReference type="PROSITE-ProRule" id="PRU00089"/>
    </source>
</evidence>
<evidence type="ECO:0000256" key="4">
    <source>
        <dbReference type="SAM" id="MobiDB-lite"/>
    </source>
</evidence>
<evidence type="ECO:0000312" key="5">
    <source>
        <dbReference type="EMBL" id="EAL27838.2"/>
    </source>
</evidence>
<comment type="function">
    <text evidence="1">Transcription factor involved in the regulation of the insulin signaling pathway. Consistently activates both the downstream target Thor\d4EBP and the feedback control target InR. Involved in negative regulation of the cell cycle, modulating cell growth and proliferation. In response to cellular stresses, such as nutrient deprivation or increased levels of reactive oxygen species, foxo is activated and inhibits growth through the action of target genes such as Thor. Foxo activated in the adult fat body can regulate lifespan in adults; an insulin peptide itself may function as one secondary messenger of insulin-regulated aging. Also regulates Lip4, homolog of human acid lipases, thereby acting as a key modulator of lipid metabolism by insulin signaling and integrates insulin responses to glucose and lipid homeostasis (By similarity).</text>
</comment>
<comment type="subunit">
    <text evidence="2">Interacts with melt.</text>
</comment>
<comment type="subcellular location">
    <subcellularLocation>
        <location evidence="2">Cytoplasm</location>
    </subcellularLocation>
    <subcellularLocation>
        <location evidence="2 3">Nucleus</location>
    </subcellularLocation>
    <text evidence="2">When phosphorylated, translocated from nucleus to cytoplasm. Dephosphorylation triggers nuclear translocation (By similarity).</text>
</comment>
<reference evidence="5" key="1">
    <citation type="journal article" date="2005" name="Genome Res.">
        <title>Comparative genome sequencing of Drosophila pseudoobscura: chromosomal, gene, and cis-element evolution.</title>
        <authorList>
            <person name="Richards S."/>
            <person name="Liu Y."/>
            <person name="Bettencourt B.R."/>
            <person name="Hradecky P."/>
            <person name="Letovsky S."/>
            <person name="Nielsen R."/>
            <person name="Thornton K."/>
            <person name="Hubisz M.J."/>
            <person name="Chen R."/>
            <person name="Meisel R.P."/>
            <person name="Couronne O."/>
            <person name="Hua S."/>
            <person name="Smith M.A."/>
            <person name="Zhang P."/>
            <person name="Liu J."/>
            <person name="Bussemaker H.J."/>
            <person name="van Batenburg M.F."/>
            <person name="Howells S.L."/>
            <person name="Scherer S.E."/>
            <person name="Sodergren E."/>
            <person name="Matthews B.B."/>
            <person name="Crosby M.A."/>
            <person name="Schroeder A.J."/>
            <person name="Ortiz-Barrientos D."/>
            <person name="Rives C.M."/>
            <person name="Metzker M.L."/>
            <person name="Muzny D.M."/>
            <person name="Scott G."/>
            <person name="Steffen D."/>
            <person name="Wheeler D.A."/>
            <person name="Worley K.C."/>
            <person name="Havlak P."/>
            <person name="Durbin K.J."/>
            <person name="Egan A."/>
            <person name="Gill R."/>
            <person name="Hume J."/>
            <person name="Morgan M.B."/>
            <person name="Miner G."/>
            <person name="Hamilton C."/>
            <person name="Huang Y."/>
            <person name="Waldron L."/>
            <person name="Verduzco D."/>
            <person name="Clerc-Blankenburg K.P."/>
            <person name="Dubchak I."/>
            <person name="Noor M.A.F."/>
            <person name="Anderson W."/>
            <person name="White K.P."/>
            <person name="Clark A.G."/>
            <person name="Schaeffer S.W."/>
            <person name="Gelbart W.M."/>
            <person name="Weinstock G.M."/>
            <person name="Gibbs R.A."/>
        </authorList>
    </citation>
    <scope>NUCLEOTIDE SEQUENCE [LARGE SCALE GENOMIC DNA]</scope>
    <source>
        <strain>MV2-25 / Tucson 14011-0121.94</strain>
    </source>
</reference>
<sequence length="644" mass="70843">MMDGFAQDWPTLTHTDNGLAMDQLSGVVGGGDLPGDVGFEPQTRARSNTWPCPRPENFVEPPDELDSTKASNQQLAAGDSQQAIQNANAAKKNSSRRNAWGNLSYADLITHAIGSATDKRLTLSQIYEWMVQNVPYFKDKGDSNSSAGWKNSIRHNLSLHNRFMRVQNEGTGKSSWWMLNPEAKPGKSVRRRAASMETSRYEKRRGRAKKRVEALRQAGVVGLNDATPSPSSSVSEGLDHFPESPLHSGGGFQLSPDFRQRASSNASSCGRLSPIRAQDLEPQDLWGFPVDYQNTTMTQAHAQALEELTGSMADELTLCNQQQQQQQQQQQQQQQQQQQQGFSAASGLPSQPPPPPYQPPQLQQQQQQQPSYSLNGPAPGGYQTLQPQSQSQCLLHRSLNCSCLHNARDGLSPNSVTTTMSPAYPNSEPSSDSLNTYSNVVLDGSSDLLVQQQQQQQLQQQQVKVEFEGQCLEVLNNEAQPIDEFNLENFPVGNLECNVEELLQQEMSYDGLLDINIPLANVSTNAPLVNLVNNSTTLSSSSSNLSGSTTTLSSSSLSAAVQLNQLQAQLQQQQQQQQQHLQQQQQHHQHQQQLLLNNNNNNNNNNSSNSSLDLATQTAATNLNAARVQYSQPSVVTSPPSWVH</sequence>
<organism>
    <name type="scientific">Drosophila pseudoobscura pseudoobscura</name>
    <name type="common">Fruit fly</name>
    <dbReference type="NCBI Taxonomy" id="46245"/>
    <lineage>
        <taxon>Eukaryota</taxon>
        <taxon>Metazoa</taxon>
        <taxon>Ecdysozoa</taxon>
        <taxon>Arthropoda</taxon>
        <taxon>Hexapoda</taxon>
        <taxon>Insecta</taxon>
        <taxon>Pterygota</taxon>
        <taxon>Neoptera</taxon>
        <taxon>Endopterygota</taxon>
        <taxon>Diptera</taxon>
        <taxon>Brachycera</taxon>
        <taxon>Muscomorpha</taxon>
        <taxon>Ephydroidea</taxon>
        <taxon>Drosophilidae</taxon>
        <taxon>Drosophila</taxon>
        <taxon>Sophophora</taxon>
    </lineage>
</organism>
<accession>Q298W7</accession>
<name>FOXO_DROPS</name>
<gene>
    <name evidence="2" type="primary">foxo</name>
    <name type="ORF">GA16248</name>
</gene>
<keyword id="KW-0010">Activator</keyword>
<keyword id="KW-0131">Cell cycle</keyword>
<keyword id="KW-0963">Cytoplasm</keyword>
<keyword id="KW-0217">Developmental protein</keyword>
<keyword id="KW-0221">Differentiation</keyword>
<keyword id="KW-0238">DNA-binding</keyword>
<keyword id="KW-0341">Growth regulation</keyword>
<keyword id="KW-0539">Nucleus</keyword>
<keyword id="KW-0597">Phosphoprotein</keyword>
<keyword id="KW-1185">Reference proteome</keyword>
<keyword id="KW-0804">Transcription</keyword>
<keyword id="KW-0805">Transcription regulation</keyword>
<protein>
    <recommendedName>
        <fullName evidence="2">Forkhead box protein O</fullName>
    </recommendedName>
</protein>
<proteinExistence type="inferred from homology"/>
<feature type="chain" id="PRO_0000396509" description="Forkhead box protein O">
    <location>
        <begin position="1"/>
        <end position="644"/>
    </location>
</feature>
<feature type="DNA-binding region" description="Fork-head" evidence="3">
    <location>
        <begin position="100"/>
        <end position="206"/>
    </location>
</feature>
<feature type="region of interest" description="Disordered" evidence="4">
    <location>
        <begin position="39"/>
        <end position="75"/>
    </location>
</feature>
<feature type="region of interest" description="Disordered" evidence="4">
    <location>
        <begin position="187"/>
        <end position="210"/>
    </location>
</feature>
<feature type="region of interest" description="Disordered" evidence="4">
    <location>
        <begin position="222"/>
        <end position="276"/>
    </location>
</feature>
<feature type="region of interest" description="Disordered" evidence="4">
    <location>
        <begin position="329"/>
        <end position="386"/>
    </location>
</feature>
<feature type="region of interest" description="Disordered" evidence="4">
    <location>
        <begin position="412"/>
        <end position="435"/>
    </location>
</feature>
<feature type="region of interest" description="Disordered" evidence="4">
    <location>
        <begin position="578"/>
        <end position="612"/>
    </location>
</feature>
<feature type="compositionally biased region" description="Polar residues" evidence="4">
    <location>
        <begin position="226"/>
        <end position="235"/>
    </location>
</feature>
<feature type="compositionally biased region" description="Polar residues" evidence="4">
    <location>
        <begin position="261"/>
        <end position="270"/>
    </location>
</feature>
<feature type="compositionally biased region" description="Low complexity" evidence="4">
    <location>
        <begin position="329"/>
        <end position="340"/>
    </location>
</feature>
<feature type="compositionally biased region" description="Pro residues" evidence="4">
    <location>
        <begin position="350"/>
        <end position="359"/>
    </location>
</feature>
<feature type="compositionally biased region" description="Low complexity" evidence="4">
    <location>
        <begin position="360"/>
        <end position="374"/>
    </location>
</feature>
<feature type="compositionally biased region" description="Polar residues" evidence="4">
    <location>
        <begin position="412"/>
        <end position="421"/>
    </location>
</feature>
<feature type="modified residue" description="Phosphothreonine; by PKB/AKT1" evidence="2">
    <location>
        <position position="49"/>
    </location>
</feature>
<feature type="modified residue" description="Phosphoserine" evidence="2">
    <location>
        <position position="80"/>
    </location>
</feature>
<feature type="modified residue" description="Phosphoserine; by PKB/AKT1" evidence="2">
    <location>
        <position position="195"/>
    </location>
</feature>
<feature type="modified residue" description="Phosphoserine; by PKB/AKT1" evidence="2">
    <location>
        <position position="264"/>
    </location>
</feature>
<feature type="modified residue" description="Phosphoserine" evidence="2">
    <location>
        <position position="267"/>
    </location>
</feature>
<feature type="modified residue" description="Phosphoserine" evidence="2">
    <location>
        <position position="268"/>
    </location>
</feature>
<feature type="modified residue" description="Phosphoserine" evidence="2">
    <location>
        <position position="273"/>
    </location>
</feature>
<dbReference type="EMBL" id="CM000070">
    <property type="protein sequence ID" value="EAL27838.2"/>
    <property type="molecule type" value="Genomic_DNA"/>
</dbReference>
<dbReference type="RefSeq" id="XP_001358695.2">
    <property type="nucleotide sequence ID" value="XM_001358658.3"/>
</dbReference>
<dbReference type="SMR" id="Q298W7"/>
<dbReference type="FunCoup" id="Q298W7">
    <property type="interactions" value="356"/>
</dbReference>
<dbReference type="STRING" id="46245.Q298W7"/>
<dbReference type="EnsemblMetazoa" id="FBtr0283644">
    <property type="protein sequence ID" value="FBpp0282082"/>
    <property type="gene ID" value="FBgn0076264"/>
</dbReference>
<dbReference type="eggNOG" id="KOG2294">
    <property type="taxonomic scope" value="Eukaryota"/>
</dbReference>
<dbReference type="HOGENOM" id="CLU_024472_1_0_1"/>
<dbReference type="InParanoid" id="Q298W7"/>
<dbReference type="OMA" id="WWMINRD"/>
<dbReference type="ChiTaRS" id="foxo">
    <property type="organism name" value="fly"/>
</dbReference>
<dbReference type="Proteomes" id="UP000001819">
    <property type="component" value="Unplaced"/>
</dbReference>
<dbReference type="Bgee" id="FBgn0076264">
    <property type="expression patterns" value="Expressed in insect adult head and 2 other cell types or tissues"/>
</dbReference>
<dbReference type="ExpressionAtlas" id="Q298W7">
    <property type="expression patterns" value="baseline"/>
</dbReference>
<dbReference type="GO" id="GO:0005737">
    <property type="term" value="C:cytoplasm"/>
    <property type="evidence" value="ECO:0000250"/>
    <property type="project" value="UniProtKB"/>
</dbReference>
<dbReference type="GO" id="GO:0005634">
    <property type="term" value="C:nucleus"/>
    <property type="evidence" value="ECO:0000250"/>
    <property type="project" value="UniProtKB"/>
</dbReference>
<dbReference type="GO" id="GO:0003700">
    <property type="term" value="F:DNA-binding transcription factor activity"/>
    <property type="evidence" value="ECO:0000250"/>
    <property type="project" value="UniProtKB"/>
</dbReference>
<dbReference type="GO" id="GO:0000981">
    <property type="term" value="F:DNA-binding transcription factor activity, RNA polymerase II-specific"/>
    <property type="evidence" value="ECO:0007669"/>
    <property type="project" value="TreeGrafter"/>
</dbReference>
<dbReference type="GO" id="GO:0000978">
    <property type="term" value="F:RNA polymerase II cis-regulatory region sequence-specific DNA binding"/>
    <property type="evidence" value="ECO:0007669"/>
    <property type="project" value="TreeGrafter"/>
</dbReference>
<dbReference type="GO" id="GO:0030154">
    <property type="term" value="P:cell differentiation"/>
    <property type="evidence" value="ECO:0007669"/>
    <property type="project" value="UniProtKB-KW"/>
</dbReference>
<dbReference type="GO" id="GO:0042593">
    <property type="term" value="P:glucose homeostasis"/>
    <property type="evidence" value="ECO:0000250"/>
    <property type="project" value="UniProtKB"/>
</dbReference>
<dbReference type="GO" id="GO:0030308">
    <property type="term" value="P:negative regulation of cell growth"/>
    <property type="evidence" value="ECO:0000250"/>
    <property type="project" value="UniProtKB"/>
</dbReference>
<dbReference type="GO" id="GO:0008285">
    <property type="term" value="P:negative regulation of cell population proliferation"/>
    <property type="evidence" value="ECO:0000250"/>
    <property type="project" value="UniProtKB"/>
</dbReference>
<dbReference type="GO" id="GO:0046627">
    <property type="term" value="P:negative regulation of insulin receptor signaling pathway"/>
    <property type="evidence" value="ECO:0000250"/>
    <property type="project" value="UniProtKB"/>
</dbReference>
<dbReference type="GO" id="GO:0006355">
    <property type="term" value="P:regulation of DNA-templated transcription"/>
    <property type="evidence" value="ECO:0000250"/>
    <property type="project" value="UniProtKB"/>
</dbReference>
<dbReference type="GO" id="GO:0019216">
    <property type="term" value="P:regulation of lipid metabolic process"/>
    <property type="evidence" value="ECO:0000250"/>
    <property type="project" value="UniProtKB"/>
</dbReference>
<dbReference type="CDD" id="cd20032">
    <property type="entry name" value="FH_FOXO"/>
    <property type="match status" value="1"/>
</dbReference>
<dbReference type="FunFam" id="1.10.10.10:FF:000032">
    <property type="entry name" value="Forkhead box protein O4"/>
    <property type="match status" value="1"/>
</dbReference>
<dbReference type="Gene3D" id="1.10.10.10">
    <property type="entry name" value="Winged helix-like DNA-binding domain superfamily/Winged helix DNA-binding domain"/>
    <property type="match status" value="1"/>
</dbReference>
<dbReference type="InterPro" id="IPR001766">
    <property type="entry name" value="Fork_head_dom"/>
</dbReference>
<dbReference type="InterPro" id="IPR030456">
    <property type="entry name" value="TF_fork_head_CS_2"/>
</dbReference>
<dbReference type="InterPro" id="IPR036388">
    <property type="entry name" value="WH-like_DNA-bd_sf"/>
</dbReference>
<dbReference type="InterPro" id="IPR036390">
    <property type="entry name" value="WH_DNA-bd_sf"/>
</dbReference>
<dbReference type="PANTHER" id="PTHR45767">
    <property type="entry name" value="FORKHEAD BOX PROTEIN O"/>
    <property type="match status" value="1"/>
</dbReference>
<dbReference type="PANTHER" id="PTHR45767:SF2">
    <property type="entry name" value="FORKHEAD BOX PROTEIN O"/>
    <property type="match status" value="1"/>
</dbReference>
<dbReference type="Pfam" id="PF00250">
    <property type="entry name" value="Forkhead"/>
    <property type="match status" value="1"/>
</dbReference>
<dbReference type="PRINTS" id="PR00053">
    <property type="entry name" value="FORKHEAD"/>
</dbReference>
<dbReference type="SMART" id="SM00339">
    <property type="entry name" value="FH"/>
    <property type="match status" value="1"/>
</dbReference>
<dbReference type="SUPFAM" id="SSF46785">
    <property type="entry name" value="Winged helix' DNA-binding domain"/>
    <property type="match status" value="1"/>
</dbReference>
<dbReference type="PROSITE" id="PS00658">
    <property type="entry name" value="FORK_HEAD_2"/>
    <property type="match status" value="1"/>
</dbReference>
<dbReference type="PROSITE" id="PS50039">
    <property type="entry name" value="FORK_HEAD_3"/>
    <property type="match status" value="1"/>
</dbReference>